<keyword id="KW-0066">ATP synthesis</keyword>
<keyword id="KW-0067">ATP-binding</keyword>
<keyword id="KW-0375">Hydrogen ion transport</keyword>
<keyword id="KW-0406">Ion transport</keyword>
<keyword id="KW-0547">Nucleotide-binding</keyword>
<keyword id="KW-1185">Reference proteome</keyword>
<keyword id="KW-1278">Translocase</keyword>
<keyword id="KW-0813">Transport</keyword>
<protein>
    <recommendedName>
        <fullName>V-type ATP synthase alpha chain 1</fullName>
        <ecNumber>7.1.2.2</ecNumber>
    </recommendedName>
    <alternativeName>
        <fullName>V-ATPase subunit A 1</fullName>
    </alternativeName>
</protein>
<comment type="function">
    <text evidence="1">Produces ATP from ADP in the presence of a proton gradient across the membrane. The V-type alpha chain is a catalytic subunit (By similarity).</text>
</comment>
<comment type="catalytic activity">
    <reaction>
        <text>ATP + H2O + 4 H(+)(in) = ADP + phosphate + 5 H(+)(out)</text>
        <dbReference type="Rhea" id="RHEA:57720"/>
        <dbReference type="ChEBI" id="CHEBI:15377"/>
        <dbReference type="ChEBI" id="CHEBI:15378"/>
        <dbReference type="ChEBI" id="CHEBI:30616"/>
        <dbReference type="ChEBI" id="CHEBI:43474"/>
        <dbReference type="ChEBI" id="CHEBI:456216"/>
        <dbReference type="EC" id="7.1.2.2"/>
    </reaction>
</comment>
<comment type="similarity">
    <text evidence="3">Belongs to the ATPase alpha/beta chains family.</text>
</comment>
<dbReference type="EC" id="7.1.2.2"/>
<dbReference type="EMBL" id="AE000520">
    <property type="protein sequence ID" value="AAC65412.1"/>
    <property type="molecule type" value="Genomic_DNA"/>
</dbReference>
<dbReference type="PIR" id="G71325">
    <property type="entry name" value="G71325"/>
</dbReference>
<dbReference type="RefSeq" id="WP_010881874.1">
    <property type="nucleotide sequence ID" value="NC_021490.2"/>
</dbReference>
<dbReference type="SMR" id="O83441"/>
<dbReference type="STRING" id="243276.TP_0426"/>
<dbReference type="TCDB" id="3.A.2.3.3">
    <property type="family name" value="the h+- or na+-translocating f-type, v-type and a-type atpase (f-atpase) superfamily"/>
</dbReference>
<dbReference type="EnsemblBacteria" id="AAC65412">
    <property type="protein sequence ID" value="AAC65412"/>
    <property type="gene ID" value="TP_0426"/>
</dbReference>
<dbReference type="KEGG" id="tpa:TP_0426"/>
<dbReference type="KEGG" id="tpw:TPANIC_0426"/>
<dbReference type="eggNOG" id="COG1155">
    <property type="taxonomic scope" value="Bacteria"/>
</dbReference>
<dbReference type="HOGENOM" id="CLU_008162_1_1_12"/>
<dbReference type="OrthoDB" id="9803053at2"/>
<dbReference type="Proteomes" id="UP000000811">
    <property type="component" value="Chromosome"/>
</dbReference>
<dbReference type="GO" id="GO:0005524">
    <property type="term" value="F:ATP binding"/>
    <property type="evidence" value="ECO:0007669"/>
    <property type="project" value="UniProtKB-UniRule"/>
</dbReference>
<dbReference type="GO" id="GO:0046933">
    <property type="term" value="F:proton-transporting ATP synthase activity, rotational mechanism"/>
    <property type="evidence" value="ECO:0007669"/>
    <property type="project" value="UniProtKB-UniRule"/>
</dbReference>
<dbReference type="GO" id="GO:0046961">
    <property type="term" value="F:proton-transporting ATPase activity, rotational mechanism"/>
    <property type="evidence" value="ECO:0007669"/>
    <property type="project" value="InterPro"/>
</dbReference>
<dbReference type="GO" id="GO:0042777">
    <property type="term" value="P:proton motive force-driven plasma membrane ATP synthesis"/>
    <property type="evidence" value="ECO:0007669"/>
    <property type="project" value="UniProtKB-UniRule"/>
</dbReference>
<dbReference type="CDD" id="cd01426">
    <property type="entry name" value="ATP-synt_F1_V1_A1_AB_FliI_N"/>
    <property type="match status" value="1"/>
</dbReference>
<dbReference type="CDD" id="cd01134">
    <property type="entry name" value="V_A-ATPase_A"/>
    <property type="match status" value="1"/>
</dbReference>
<dbReference type="Gene3D" id="2.30.30.650">
    <property type="match status" value="1"/>
</dbReference>
<dbReference type="Gene3D" id="2.40.50.100">
    <property type="match status" value="1"/>
</dbReference>
<dbReference type="Gene3D" id="1.10.1140.10">
    <property type="entry name" value="Bovine Mitochondrial F1-atpase, Atp Synthase Beta Chain, Chain D, domain 3"/>
    <property type="match status" value="1"/>
</dbReference>
<dbReference type="Gene3D" id="3.40.50.300">
    <property type="entry name" value="P-loop containing nucleotide triphosphate hydrolases"/>
    <property type="match status" value="1"/>
</dbReference>
<dbReference type="HAMAP" id="MF_00309">
    <property type="entry name" value="ATP_synth_A_arch"/>
    <property type="match status" value="1"/>
</dbReference>
<dbReference type="InterPro" id="IPR055190">
    <property type="entry name" value="ATP-synt_VA_C"/>
</dbReference>
<dbReference type="InterPro" id="IPR031686">
    <property type="entry name" value="ATP-synth_a_Xtn"/>
</dbReference>
<dbReference type="InterPro" id="IPR020003">
    <property type="entry name" value="ATPase_a/bsu_AS"/>
</dbReference>
<dbReference type="InterPro" id="IPR004100">
    <property type="entry name" value="ATPase_F1/V1/A1_a/bsu_N"/>
</dbReference>
<dbReference type="InterPro" id="IPR000194">
    <property type="entry name" value="ATPase_F1/V1/A1_a/bsu_nucl-bd"/>
</dbReference>
<dbReference type="InterPro" id="IPR024034">
    <property type="entry name" value="ATPase_F1/V1_b/a_C"/>
</dbReference>
<dbReference type="InterPro" id="IPR027417">
    <property type="entry name" value="P-loop_NTPase"/>
</dbReference>
<dbReference type="InterPro" id="IPR022878">
    <property type="entry name" value="V-ATPase_asu"/>
</dbReference>
<dbReference type="NCBIfam" id="NF003220">
    <property type="entry name" value="PRK04192.1"/>
    <property type="match status" value="1"/>
</dbReference>
<dbReference type="PANTHER" id="PTHR43607:SF1">
    <property type="entry name" value="H(+)-TRANSPORTING TWO-SECTOR ATPASE"/>
    <property type="match status" value="1"/>
</dbReference>
<dbReference type="PANTHER" id="PTHR43607">
    <property type="entry name" value="V-TYPE PROTON ATPASE CATALYTIC SUBUNIT A"/>
    <property type="match status" value="1"/>
</dbReference>
<dbReference type="Pfam" id="PF00006">
    <property type="entry name" value="ATP-synt_ab"/>
    <property type="match status" value="1"/>
</dbReference>
<dbReference type="Pfam" id="PF02874">
    <property type="entry name" value="ATP-synt_ab_N"/>
    <property type="match status" value="1"/>
</dbReference>
<dbReference type="Pfam" id="PF16886">
    <property type="entry name" value="ATP-synt_ab_Xtn"/>
    <property type="match status" value="1"/>
</dbReference>
<dbReference type="Pfam" id="PF22919">
    <property type="entry name" value="ATP-synt_VA_C"/>
    <property type="match status" value="1"/>
</dbReference>
<dbReference type="SUPFAM" id="SSF52540">
    <property type="entry name" value="P-loop containing nucleoside triphosphate hydrolases"/>
    <property type="match status" value="1"/>
</dbReference>
<dbReference type="PROSITE" id="PS00152">
    <property type="entry name" value="ATPASE_ALPHA_BETA"/>
    <property type="match status" value="1"/>
</dbReference>
<proteinExistence type="inferred from homology"/>
<evidence type="ECO:0000250" key="1"/>
<evidence type="ECO:0000255" key="2"/>
<evidence type="ECO:0000305" key="3"/>
<reference key="1">
    <citation type="journal article" date="1998" name="Science">
        <title>Complete genome sequence of Treponema pallidum, the syphilis spirochete.</title>
        <authorList>
            <person name="Fraser C.M."/>
            <person name="Norris S.J."/>
            <person name="Weinstock G.M."/>
            <person name="White O."/>
            <person name="Sutton G.G."/>
            <person name="Dodson R.J."/>
            <person name="Gwinn M.L."/>
            <person name="Hickey E.K."/>
            <person name="Clayton R.A."/>
            <person name="Ketchum K.A."/>
            <person name="Sodergren E."/>
            <person name="Hardham J.M."/>
            <person name="McLeod M.P."/>
            <person name="Salzberg S.L."/>
            <person name="Peterson J.D."/>
            <person name="Khalak H.G."/>
            <person name="Richardson D.L."/>
            <person name="Howell J.K."/>
            <person name="Chidambaram M."/>
            <person name="Utterback T.R."/>
            <person name="McDonald L.A."/>
            <person name="Artiach P."/>
            <person name="Bowman C."/>
            <person name="Cotton M.D."/>
            <person name="Fujii C."/>
            <person name="Garland S.A."/>
            <person name="Hatch B."/>
            <person name="Horst K."/>
            <person name="Roberts K.M."/>
            <person name="Sandusky M."/>
            <person name="Weidman J.F."/>
            <person name="Smith H.O."/>
            <person name="Venter J.C."/>
        </authorList>
    </citation>
    <scope>NUCLEOTIDE SEQUENCE [LARGE SCALE GENOMIC DNA]</scope>
    <source>
        <strain>Nichols</strain>
    </source>
</reference>
<sequence>MTQTKGIVSAVNGNMVSVTFEGVVSLNEVGYVHVGNARLKAEIIRVRGREAQLQVFEITRGVSVGDRVEFTGDLLSVELGPGLLGQVYDGLQNPLPLLAEKVGYFLERGVYLPALSRTSEWMFTPHVSVGERVVRGDVLGYTPEGALKHRIMVPFHMGDSYEVVFIQTAGTYRVHDVIARVRDAQGHEHELTMAFRWPVKRPVHCYAERLKPTEPLVTSIRTIDTFFPVAKGGTYCIPGPFGAGKTVLQHSTSRNADVDVVVIAACGERAGEVVETLREFPDLTDPRTGRSLMERTVIVCNTSSMPVASREASVYTGVTLAEYYRQMGLDVLLLADSTSRWAQALREMSGRLEEIPGEEAFPAYLESCIAAFYERAGVVRLRSGEKGSVTIGGTVSPAGGNFEEPVTQATLKVVGAFHGLSRERSDARRYPAVHPLDSWSKYPSVLDARAVAYGRSFLRRGAEVEQMMRVVGEEGTSMEDFLVYLKGSFLDSVYLQQNSFDTVDSAVPVARQKHCYAIVMRVLGSVLAFESKDDARAYFSKLGHMFIDYNCCAWNSEAFVEKEKEIRAFLQGESTKIDSEAEGIIRGME</sequence>
<accession>O83441</accession>
<organism>
    <name type="scientific">Treponema pallidum (strain Nichols)</name>
    <dbReference type="NCBI Taxonomy" id="243276"/>
    <lineage>
        <taxon>Bacteria</taxon>
        <taxon>Pseudomonadati</taxon>
        <taxon>Spirochaetota</taxon>
        <taxon>Spirochaetia</taxon>
        <taxon>Spirochaetales</taxon>
        <taxon>Treponemataceae</taxon>
        <taxon>Treponema</taxon>
    </lineage>
</organism>
<gene>
    <name type="primary">atpA1</name>
    <name type="ordered locus">TP_0426</name>
</gene>
<feature type="chain" id="PRO_0000144620" description="V-type ATP synthase alpha chain 1">
    <location>
        <begin position="1"/>
        <end position="589"/>
    </location>
</feature>
<feature type="binding site" evidence="2">
    <location>
        <begin position="239"/>
        <end position="246"/>
    </location>
    <ligand>
        <name>ATP</name>
        <dbReference type="ChEBI" id="CHEBI:30616"/>
    </ligand>
</feature>
<name>VATA1_TREPA</name>